<proteinExistence type="evidence at protein level"/>
<protein>
    <recommendedName>
        <fullName evidence="4">U-stichotoxin-Hau3a</fullName>
        <shortName evidence="4">U-SHTX-Hau3a</shortName>
    </recommendedName>
    <alternativeName>
        <fullName evidence="4">Hau IV</fullName>
    </alternativeName>
</protein>
<comment type="function">
    <text evidence="3">Toxin that is lethal to crab.</text>
</comment>
<comment type="subcellular location">
    <subcellularLocation>
        <location evidence="5">Secreted</location>
    </subcellularLocation>
    <subcellularLocation>
        <location evidence="5">Nematocyst</location>
    </subcellularLocation>
</comment>
<comment type="PTM">
    <text evidence="5">Contains 3 disulfide bonds.</text>
</comment>
<comment type="mass spectrometry"/>
<comment type="toxic dose">
    <text evidence="3">LD(50) is 53 ug/kg when injected into the body cavity of freshwater crabs (G.dehaani).</text>
</comment>
<comment type="similarity">
    <text evidence="5">Belongs to the sea anemone sodium channel inhibitory toxin family. Type I subfamily.</text>
</comment>
<accession>A0A0N7KBN8</accession>
<name>NA3A_HETAU</name>
<gene>
    <name evidence="7" type="primary">HAUTX4</name>
</gene>
<evidence type="ECO:0000250" key="1">
    <source>
        <dbReference type="UniProtKB" id="P0C280"/>
    </source>
</evidence>
<evidence type="ECO:0000255" key="2"/>
<evidence type="ECO:0000269" key="3">
    <source>
    </source>
</evidence>
<evidence type="ECO:0000303" key="4">
    <source>
    </source>
</evidence>
<evidence type="ECO:0000305" key="5"/>
<evidence type="ECO:0000305" key="6">
    <source>
    </source>
</evidence>
<evidence type="ECO:0000312" key="7">
    <source>
        <dbReference type="EMBL" id="BAS68535.1"/>
    </source>
</evidence>
<sequence>MNHLIILVVAAVFLGMASAEDVFHKRFTVSCLCASDGPSVHGNKLTGTVAVGGCNPGWHKCNTEHNVLYECCKKN</sequence>
<dbReference type="EMBL" id="LC054040">
    <property type="protein sequence ID" value="BAS68535.1"/>
    <property type="molecule type" value="mRNA"/>
</dbReference>
<dbReference type="GO" id="GO:0005576">
    <property type="term" value="C:extracellular region"/>
    <property type="evidence" value="ECO:0007669"/>
    <property type="project" value="UniProtKB-SubCell"/>
</dbReference>
<dbReference type="GO" id="GO:0042151">
    <property type="term" value="C:nematocyst"/>
    <property type="evidence" value="ECO:0007669"/>
    <property type="project" value="UniProtKB-SubCell"/>
</dbReference>
<dbReference type="GO" id="GO:0090729">
    <property type="term" value="F:toxin activity"/>
    <property type="evidence" value="ECO:0007669"/>
    <property type="project" value="UniProtKB-KW"/>
</dbReference>
<dbReference type="Gene3D" id="2.20.20.10">
    <property type="entry name" value="Anthopleurin-A"/>
    <property type="match status" value="1"/>
</dbReference>
<dbReference type="InterPro" id="IPR023355">
    <property type="entry name" value="Myo_ane_neurotoxin_sf"/>
</dbReference>
<dbReference type="Pfam" id="PF00706">
    <property type="entry name" value="Toxin_4"/>
    <property type="match status" value="1"/>
</dbReference>
<dbReference type="SUPFAM" id="SSF57392">
    <property type="entry name" value="Defensin-like"/>
    <property type="match status" value="1"/>
</dbReference>
<keyword id="KW-0903">Direct protein sequencing</keyword>
<keyword id="KW-1015">Disulfide bond</keyword>
<keyword id="KW-0166">Nematocyst</keyword>
<keyword id="KW-0964">Secreted</keyword>
<keyword id="KW-0732">Signal</keyword>
<keyword id="KW-0800">Toxin</keyword>
<feature type="signal peptide" evidence="2">
    <location>
        <begin position="1"/>
        <end position="19"/>
    </location>
</feature>
<feature type="propeptide" id="PRO_0000462082" evidence="6">
    <location>
        <begin position="20"/>
        <end position="26"/>
    </location>
</feature>
<feature type="peptide" id="PRO_5006014697" description="U-stichotoxin-Hau3a" evidence="3">
    <location>
        <begin position="27"/>
        <end position="75"/>
    </location>
</feature>
<feature type="disulfide bond" evidence="1">
    <location>
        <begin position="31"/>
        <end position="71"/>
    </location>
</feature>
<feature type="disulfide bond" evidence="1">
    <location>
        <begin position="33"/>
        <end position="61"/>
    </location>
</feature>
<feature type="disulfide bond" evidence="1">
    <location>
        <begin position="54"/>
        <end position="72"/>
    </location>
</feature>
<organism>
    <name type="scientific">Heteractis aurora</name>
    <name type="common">Banded sea anemone</name>
    <name type="synonym">Actinia aurora</name>
    <dbReference type="NCBI Taxonomy" id="478399"/>
    <lineage>
        <taxon>Eukaryota</taxon>
        <taxon>Metazoa</taxon>
        <taxon>Cnidaria</taxon>
        <taxon>Anthozoa</taxon>
        <taxon>Hexacorallia</taxon>
        <taxon>Actiniaria</taxon>
        <taxon>Stichodactylidae</taxon>
        <taxon>Heteractis</taxon>
    </lineage>
</organism>
<reference evidence="7" key="1">
    <citation type="journal article" date="2024" name="J. Venom. Anim. Toxins Incl. Trop. Dis.">
        <title>Isolation and cDNA cloning of four peptide toxins from the sea anemone Heteractis aurora.</title>
        <authorList>
            <person name="Homma T."/>
            <person name="Ishida M."/>
            <person name="Nagashima Y."/>
            <person name="Shiomi K."/>
        </authorList>
    </citation>
    <scope>NUCLEOTIDE SEQUENCE [MRNA]</scope>
    <scope>PROTEIN SEQUENCE OF 27-45</scope>
    <scope>MASS SPECTROMETRY</scope>
    <scope>TOXIC DOSE</scope>
</reference>